<proteinExistence type="inferred from homology"/>
<gene>
    <name type="ordered locus">BAB1_1430</name>
</gene>
<evidence type="ECO:0000255" key="1">
    <source>
        <dbReference type="HAMAP-Rule" id="MF_00761"/>
    </source>
</evidence>
<name>Y1430_BRUA2</name>
<comment type="similarity">
    <text evidence="1">Belongs to the UPF0303 family.</text>
</comment>
<organism>
    <name type="scientific">Brucella abortus (strain 2308)</name>
    <dbReference type="NCBI Taxonomy" id="359391"/>
    <lineage>
        <taxon>Bacteria</taxon>
        <taxon>Pseudomonadati</taxon>
        <taxon>Pseudomonadota</taxon>
        <taxon>Alphaproteobacteria</taxon>
        <taxon>Hyphomicrobiales</taxon>
        <taxon>Brucellaceae</taxon>
        <taxon>Brucella/Ochrobactrum group</taxon>
        <taxon>Brucella</taxon>
    </lineage>
</organism>
<dbReference type="EMBL" id="AM040264">
    <property type="protein sequence ID" value="CAJ11386.1"/>
    <property type="molecule type" value="Genomic_DNA"/>
</dbReference>
<dbReference type="RefSeq" id="WP_002964519.1">
    <property type="nucleotide sequence ID" value="NZ_KN046823.1"/>
</dbReference>
<dbReference type="SMR" id="Q2YPT3"/>
<dbReference type="STRING" id="359391.BAB1_1430"/>
<dbReference type="KEGG" id="bmf:BAB1_1430"/>
<dbReference type="PATRIC" id="fig|359391.11.peg.881"/>
<dbReference type="HOGENOM" id="CLU_101036_2_2_5"/>
<dbReference type="PhylomeDB" id="Q2YPT3"/>
<dbReference type="Proteomes" id="UP000002719">
    <property type="component" value="Chromosome I"/>
</dbReference>
<dbReference type="Gene3D" id="3.30.450.150">
    <property type="entry name" value="Haem-degrading domain"/>
    <property type="match status" value="1"/>
</dbReference>
<dbReference type="HAMAP" id="MF_00761">
    <property type="entry name" value="UPF0303"/>
    <property type="match status" value="1"/>
</dbReference>
<dbReference type="InterPro" id="IPR005624">
    <property type="entry name" value="PduO/GlcC-like"/>
</dbReference>
<dbReference type="InterPro" id="IPR038084">
    <property type="entry name" value="PduO/GlcC-like_sf"/>
</dbReference>
<dbReference type="InterPro" id="IPR010371">
    <property type="entry name" value="YBR137W-like"/>
</dbReference>
<dbReference type="NCBIfam" id="NF002693">
    <property type="entry name" value="PRK02487.1-2"/>
    <property type="match status" value="1"/>
</dbReference>
<dbReference type="NCBIfam" id="NF002696">
    <property type="entry name" value="PRK02487.1-5"/>
    <property type="match status" value="1"/>
</dbReference>
<dbReference type="PANTHER" id="PTHR28255">
    <property type="match status" value="1"/>
</dbReference>
<dbReference type="PANTHER" id="PTHR28255:SF1">
    <property type="entry name" value="UPF0303 PROTEIN YBR137W"/>
    <property type="match status" value="1"/>
</dbReference>
<dbReference type="Pfam" id="PF03928">
    <property type="entry name" value="HbpS-like"/>
    <property type="match status" value="1"/>
</dbReference>
<dbReference type="PIRSF" id="PIRSF008757">
    <property type="entry name" value="UCP008757"/>
    <property type="match status" value="1"/>
</dbReference>
<dbReference type="SUPFAM" id="SSF143744">
    <property type="entry name" value="GlcG-like"/>
    <property type="match status" value="1"/>
</dbReference>
<sequence length="169" mass="18567">MAQGDDNKQAIGQIIRQEQALIFPSLDENDAFSLGQRIRDIAVKDKLGIAIDISLWDRRLFFAATAGATADNTEWLRRKFNVVRRFHVSTYRLVLEQNREDRMFAPYKALDVADYALAGGGFPIRVSGAGVIGAVIVSGLPQREDHNLVVRAVAEHVGQDPVALALPAA</sequence>
<protein>
    <recommendedName>
        <fullName evidence="1">UPF0303 protein BAB1_1430</fullName>
    </recommendedName>
</protein>
<feature type="chain" id="PRO_1000046734" description="UPF0303 protein BAB1_1430">
    <location>
        <begin position="1"/>
        <end position="169"/>
    </location>
</feature>
<reference key="1">
    <citation type="journal article" date="2005" name="Infect. Immun.">
        <title>Whole-genome analyses of speciation events in pathogenic Brucellae.</title>
        <authorList>
            <person name="Chain P.S."/>
            <person name="Comerci D.J."/>
            <person name="Tolmasky M.E."/>
            <person name="Larimer F.W."/>
            <person name="Malfatti S.A."/>
            <person name="Vergez L.M."/>
            <person name="Aguero F."/>
            <person name="Land M.L."/>
            <person name="Ugalde R.A."/>
            <person name="Garcia E."/>
        </authorList>
    </citation>
    <scope>NUCLEOTIDE SEQUENCE [LARGE SCALE GENOMIC DNA]</scope>
    <source>
        <strain>2308</strain>
    </source>
</reference>
<keyword id="KW-1185">Reference proteome</keyword>
<accession>Q2YPT3</accession>